<sequence>MKLNEQIPKDLLRLIKSSKYVHVATCSSNCIPSVSLMHYIFVSSAETFHKHEYSIEIDCNDYIIFTVFEKSVTFRNVMSNPNVALLFHDWITAKNLTLRKKSVHSKDDFSFVESESTKFNNFLRDLNQSELNQVSATINGIADIVNPNSEESTYYRRLLLTVNPDADIFILGEDTAIIKVNIQKIKVSDMENNTSTYGQTVQPV</sequence>
<reference key="1">
    <citation type="journal article" date="1997" name="Nature">
        <title>The nucleotide sequence of Saccharomyces cerevisiae chromosome XII.</title>
        <authorList>
            <person name="Johnston M."/>
            <person name="Hillier L.W."/>
            <person name="Riles L."/>
            <person name="Albermann K."/>
            <person name="Andre B."/>
            <person name="Ansorge W."/>
            <person name="Benes V."/>
            <person name="Brueckner M."/>
            <person name="Delius H."/>
            <person name="Dubois E."/>
            <person name="Duesterhoeft A."/>
            <person name="Entian K.-D."/>
            <person name="Floeth M."/>
            <person name="Goffeau A."/>
            <person name="Hebling U."/>
            <person name="Heumann K."/>
            <person name="Heuss-Neitzel D."/>
            <person name="Hilbert H."/>
            <person name="Hilger F."/>
            <person name="Kleine K."/>
            <person name="Koetter P."/>
            <person name="Louis E.J."/>
            <person name="Messenguy F."/>
            <person name="Mewes H.-W."/>
            <person name="Miosga T."/>
            <person name="Moestl D."/>
            <person name="Mueller-Auer S."/>
            <person name="Nentwich U."/>
            <person name="Obermaier B."/>
            <person name="Piravandi E."/>
            <person name="Pohl T.M."/>
            <person name="Portetelle D."/>
            <person name="Purnelle B."/>
            <person name="Rechmann S."/>
            <person name="Rieger M."/>
            <person name="Rinke M."/>
            <person name="Rose M."/>
            <person name="Scharfe M."/>
            <person name="Scherens B."/>
            <person name="Scholler P."/>
            <person name="Schwager C."/>
            <person name="Schwarz S."/>
            <person name="Underwood A.P."/>
            <person name="Urrestarazu L.A."/>
            <person name="Vandenbol M."/>
            <person name="Verhasselt P."/>
            <person name="Vierendeels F."/>
            <person name="Voet M."/>
            <person name="Volckaert G."/>
            <person name="Voss H."/>
            <person name="Wambutt R."/>
            <person name="Wedler E."/>
            <person name="Wedler H."/>
            <person name="Zimmermann F.K."/>
            <person name="Zollner A."/>
            <person name="Hani J."/>
            <person name="Hoheisel J.D."/>
        </authorList>
    </citation>
    <scope>NUCLEOTIDE SEQUENCE [LARGE SCALE GENOMIC DNA]</scope>
    <source>
        <strain>ATCC 204508 / S288c</strain>
    </source>
</reference>
<reference key="2">
    <citation type="journal article" date="2014" name="G3 (Bethesda)">
        <title>The reference genome sequence of Saccharomyces cerevisiae: Then and now.</title>
        <authorList>
            <person name="Engel S.R."/>
            <person name="Dietrich F.S."/>
            <person name="Fisk D.G."/>
            <person name="Binkley G."/>
            <person name="Balakrishnan R."/>
            <person name="Costanzo M.C."/>
            <person name="Dwight S.S."/>
            <person name="Hitz B.C."/>
            <person name="Karra K."/>
            <person name="Nash R.S."/>
            <person name="Weng S."/>
            <person name="Wong E.D."/>
            <person name="Lloyd P."/>
            <person name="Skrzypek M.S."/>
            <person name="Miyasato S.R."/>
            <person name="Simison M."/>
            <person name="Cherry J.M."/>
        </authorList>
    </citation>
    <scope>GENOME REANNOTATION</scope>
    <source>
        <strain>ATCC 204508 / S288c</strain>
    </source>
</reference>
<reference key="3">
    <citation type="journal article" date="2007" name="Genome Res.">
        <title>Approaching a complete repository of sequence-verified protein-encoding clones for Saccharomyces cerevisiae.</title>
        <authorList>
            <person name="Hu Y."/>
            <person name="Rolfs A."/>
            <person name="Bhullar B."/>
            <person name="Murthy T.V.S."/>
            <person name="Zhu C."/>
            <person name="Berger M.F."/>
            <person name="Camargo A.A."/>
            <person name="Kelley F."/>
            <person name="McCarron S."/>
            <person name="Jepson D."/>
            <person name="Richardson A."/>
            <person name="Raphael J."/>
            <person name="Moreira D."/>
            <person name="Taycher E."/>
            <person name="Zuo D."/>
            <person name="Mohr S."/>
            <person name="Kane M.F."/>
            <person name="Williamson J."/>
            <person name="Simpson A.J.G."/>
            <person name="Bulyk M.L."/>
            <person name="Harlow E."/>
            <person name="Marsischky G."/>
            <person name="Kolodner R.D."/>
            <person name="LaBaer J."/>
        </authorList>
    </citation>
    <scope>NUCLEOTIDE SEQUENCE [GENOMIC DNA]</scope>
    <source>
        <strain>ATCC 204508 / S288c</strain>
    </source>
</reference>
<reference key="4">
    <citation type="journal article" date="2003" name="Nature">
        <title>Global analysis of protein expression in yeast.</title>
        <authorList>
            <person name="Ghaemmaghami S."/>
            <person name="Huh W.-K."/>
            <person name="Bower K."/>
            <person name="Howson R.W."/>
            <person name="Belle A."/>
            <person name="Dephoure N."/>
            <person name="O'Shea E.K."/>
            <person name="Weissman J.S."/>
        </authorList>
    </citation>
    <scope>LEVEL OF PROTEIN EXPRESSION [LARGE SCALE ANALYSIS]</scope>
</reference>
<keyword id="KW-0963">Cytoplasm</keyword>
<keyword id="KW-0285">Flavoprotein</keyword>
<keyword id="KW-0288">FMN</keyword>
<keyword id="KW-0539">Nucleus</keyword>
<keyword id="KW-1185">Reference proteome</keyword>
<protein>
    <recommendedName>
        <fullName>Pyridoxamine 5'-phosphate oxidase YLR456W homolog</fullName>
    </recommendedName>
    <alternativeName>
        <fullName>PNP/PMP oxidase YLR456W homolog</fullName>
        <shortName>PNPOx YLR456W homolog</shortName>
    </alternativeName>
</protein>
<accession>Q06199</accession>
<accession>D6VZ90</accession>
<feature type="chain" id="PRO_0000268191" description="Pyridoxamine 5'-phosphate oxidase YLR456W homolog">
    <location>
        <begin position="1"/>
        <end position="204"/>
    </location>
</feature>
<feature type="binding site" evidence="1">
    <location>
        <begin position="65"/>
        <end position="66"/>
    </location>
    <ligand>
        <name>FMN</name>
        <dbReference type="ChEBI" id="CHEBI:58210"/>
    </ligand>
</feature>
<feature type="binding site" evidence="1">
    <location>
        <position position="127"/>
    </location>
    <ligand>
        <name>FMN</name>
        <dbReference type="ChEBI" id="CHEBI:58210"/>
    </ligand>
</feature>
<proteinExistence type="evidence at protein level"/>
<organism>
    <name type="scientific">Saccharomyces cerevisiae (strain ATCC 204508 / S288c)</name>
    <name type="common">Baker's yeast</name>
    <dbReference type="NCBI Taxonomy" id="559292"/>
    <lineage>
        <taxon>Eukaryota</taxon>
        <taxon>Fungi</taxon>
        <taxon>Dikarya</taxon>
        <taxon>Ascomycota</taxon>
        <taxon>Saccharomycotina</taxon>
        <taxon>Saccharomycetes</taxon>
        <taxon>Saccharomycetales</taxon>
        <taxon>Saccharomycetaceae</taxon>
        <taxon>Saccharomyces</taxon>
    </lineage>
</organism>
<name>YL456_YEAST</name>
<evidence type="ECO:0000250" key="1"/>
<evidence type="ECO:0000269" key="2">
    <source>
    </source>
</evidence>
<evidence type="ECO:0000305" key="3"/>
<comment type="cofactor">
    <cofactor evidence="1">
        <name>FMN</name>
        <dbReference type="ChEBI" id="CHEBI:58210"/>
    </cofactor>
    <text evidence="1">Binds 1 FMN per subunit.</text>
</comment>
<comment type="subcellular location">
    <subcellularLocation>
        <location>Cytoplasm</location>
    </subcellularLocation>
    <subcellularLocation>
        <location evidence="1">Nucleus</location>
    </subcellularLocation>
</comment>
<comment type="miscellaneous">
    <text evidence="2">Present with 589 molecules/cell in log phase SD medium.</text>
</comment>
<comment type="similarity">
    <text evidence="3">Belongs to the pyridoxamine 5'-phosphate oxidase family.</text>
</comment>
<dbReference type="EMBL" id="U22383">
    <property type="protein sequence ID" value="AAB64720.1"/>
    <property type="molecule type" value="Genomic_DNA"/>
</dbReference>
<dbReference type="EMBL" id="AY558231">
    <property type="protein sequence ID" value="AAS56557.1"/>
    <property type="molecule type" value="Genomic_DNA"/>
</dbReference>
<dbReference type="EMBL" id="BK006945">
    <property type="protein sequence ID" value="DAA09756.1"/>
    <property type="molecule type" value="Genomic_DNA"/>
</dbReference>
<dbReference type="PIR" id="S59415">
    <property type="entry name" value="S59415"/>
</dbReference>
<dbReference type="RefSeq" id="NP_013561.1">
    <property type="nucleotide sequence ID" value="NM_001182344.1"/>
</dbReference>
<dbReference type="BioGRID" id="31715">
    <property type="interactions" value="55"/>
</dbReference>
<dbReference type="DIP" id="DIP-942N"/>
<dbReference type="FunCoup" id="Q06199">
    <property type="interactions" value="37"/>
</dbReference>
<dbReference type="IntAct" id="Q06199">
    <property type="interactions" value="2"/>
</dbReference>
<dbReference type="STRING" id="4932.YLR456W"/>
<dbReference type="PaxDb" id="4932-YLR456W"/>
<dbReference type="PeptideAtlas" id="Q06199"/>
<dbReference type="EnsemblFungi" id="YLR456W_mRNA">
    <property type="protein sequence ID" value="YLR456W"/>
    <property type="gene ID" value="YLR456W"/>
</dbReference>
<dbReference type="GeneID" id="851178"/>
<dbReference type="KEGG" id="sce:YLR456W"/>
<dbReference type="AGR" id="SGD:S000004448"/>
<dbReference type="SGD" id="S000004448">
    <property type="gene designation" value="YLR456W"/>
</dbReference>
<dbReference type="VEuPathDB" id="FungiDB:YLR456W"/>
<dbReference type="eggNOG" id="ENOG502S4PT">
    <property type="taxonomic scope" value="Eukaryota"/>
</dbReference>
<dbReference type="GeneTree" id="ENSGT00940000176627"/>
<dbReference type="HOGENOM" id="CLU_078856_1_0_1"/>
<dbReference type="InParanoid" id="Q06199"/>
<dbReference type="OMA" id="HDWISAN"/>
<dbReference type="OrthoDB" id="5300823at2759"/>
<dbReference type="BioCyc" id="YEAST:G3O-32509-MONOMER"/>
<dbReference type="BioGRID-ORCS" id="851178">
    <property type="hits" value="0 hits in 10 CRISPR screens"/>
</dbReference>
<dbReference type="PRO" id="PR:Q06199"/>
<dbReference type="Proteomes" id="UP000002311">
    <property type="component" value="Chromosome XII"/>
</dbReference>
<dbReference type="RNAct" id="Q06199">
    <property type="molecule type" value="protein"/>
</dbReference>
<dbReference type="GO" id="GO:0005737">
    <property type="term" value="C:cytoplasm"/>
    <property type="evidence" value="ECO:0007669"/>
    <property type="project" value="UniProtKB-SubCell"/>
</dbReference>
<dbReference type="GO" id="GO:0005634">
    <property type="term" value="C:nucleus"/>
    <property type="evidence" value="ECO:0007669"/>
    <property type="project" value="UniProtKB-SubCell"/>
</dbReference>
<dbReference type="Gene3D" id="2.30.110.10">
    <property type="entry name" value="Electron Transport, Fmn-binding Protein, Chain A"/>
    <property type="match status" value="1"/>
</dbReference>
<dbReference type="InterPro" id="IPR052841">
    <property type="entry name" value="PMP_oxidase-like"/>
</dbReference>
<dbReference type="InterPro" id="IPR012349">
    <property type="entry name" value="Split_barrel_FMN-bd"/>
</dbReference>
<dbReference type="PANTHER" id="PTHR28040">
    <property type="entry name" value="PYRIDOXAMINE 5'-PHOSPHATE OXIDASE YLR456W HOMOLOG-RELATED"/>
    <property type="match status" value="1"/>
</dbReference>
<dbReference type="PANTHER" id="PTHR28040:SF1">
    <property type="entry name" value="PYRIDOXAMINE 5'-PHOSPHATE OXIDASE YLR456W HOMOLOG-RELATED"/>
    <property type="match status" value="1"/>
</dbReference>
<dbReference type="SUPFAM" id="SSF50475">
    <property type="entry name" value="FMN-binding split barrel"/>
    <property type="match status" value="1"/>
</dbReference>
<gene>
    <name type="ordered locus">YLR456W</name>
</gene>